<sequence>MVTVGEVRKAQRAEGPATILAIGTATPANCVNQSTYPDYYFRITNSEHKTELKEKFQRMCDKSMITKRYMHLTEEILKENPSFCEYMAPSLDARQDIAVVEVPKLGKEAAQSAIKGWGQPKSKITHVVFCTTSGVDMPGADYQLTKLLGLRPSVKRLMMYQQGCFAGGTVLRLAKDLAENNKGARVLIVCSEITVVTFRGPSEAHLDSLVGQALFGDGAAAVIVGADPTPAEKPLFQLVSAAQTLAPDSCGAIDGHLREVGLTFHLLKDVPSVVSNNIEKCLFEAFNPLGISDWNSVFWIAHPGGPAILDQVEDKLGLKPEKLRATRHVLSEYGNMSSACVLFILDEMRKASSNDGLGTTGEGLEWGVLFGFGPGLTIETVVLHSVPT</sequence>
<dbReference type="EC" id="2.3.1.74"/>
<dbReference type="EMBL" id="AB037389">
    <property type="protein sequence ID" value="BAA90328.1"/>
    <property type="molecule type" value="mRNA"/>
</dbReference>
<dbReference type="SMR" id="Q9MB40"/>
<dbReference type="UniPathway" id="UPA00154"/>
<dbReference type="GO" id="GO:0016210">
    <property type="term" value="F:naringenin-chalcone synthase activity"/>
    <property type="evidence" value="ECO:0007669"/>
    <property type="project" value="UniProtKB-EC"/>
</dbReference>
<dbReference type="GO" id="GO:0009813">
    <property type="term" value="P:flavonoid biosynthetic process"/>
    <property type="evidence" value="ECO:0007669"/>
    <property type="project" value="UniProtKB-UniPathway"/>
</dbReference>
<dbReference type="GO" id="GO:0030639">
    <property type="term" value="P:polyketide biosynthetic process"/>
    <property type="evidence" value="ECO:0007669"/>
    <property type="project" value="TreeGrafter"/>
</dbReference>
<dbReference type="CDD" id="cd00831">
    <property type="entry name" value="CHS_like"/>
    <property type="match status" value="1"/>
</dbReference>
<dbReference type="FunFam" id="3.40.47.10:FF:000014">
    <property type="entry name" value="Chalcone synthase 1"/>
    <property type="match status" value="1"/>
</dbReference>
<dbReference type="FunFam" id="3.40.47.10:FF:000025">
    <property type="entry name" value="Chalcone synthase 2"/>
    <property type="match status" value="1"/>
</dbReference>
<dbReference type="Gene3D" id="3.40.47.10">
    <property type="match status" value="2"/>
</dbReference>
<dbReference type="InterPro" id="IPR012328">
    <property type="entry name" value="Chalcone/stilbene_synt_C"/>
</dbReference>
<dbReference type="InterPro" id="IPR001099">
    <property type="entry name" value="Chalcone/stilbene_synt_N"/>
</dbReference>
<dbReference type="InterPro" id="IPR018088">
    <property type="entry name" value="Chalcone/stilbene_synthase_AS"/>
</dbReference>
<dbReference type="InterPro" id="IPR011141">
    <property type="entry name" value="Polyketide_synthase_type-III"/>
</dbReference>
<dbReference type="InterPro" id="IPR016039">
    <property type="entry name" value="Thiolase-like"/>
</dbReference>
<dbReference type="PANTHER" id="PTHR11877:SF80">
    <property type="entry name" value="CHALCONE SYNTHASE 1"/>
    <property type="match status" value="1"/>
</dbReference>
<dbReference type="PANTHER" id="PTHR11877">
    <property type="entry name" value="HYDROXYMETHYLGLUTARYL-COA SYNTHASE"/>
    <property type="match status" value="1"/>
</dbReference>
<dbReference type="Pfam" id="PF02797">
    <property type="entry name" value="Chal_sti_synt_C"/>
    <property type="match status" value="1"/>
</dbReference>
<dbReference type="Pfam" id="PF00195">
    <property type="entry name" value="Chal_sti_synt_N"/>
    <property type="match status" value="1"/>
</dbReference>
<dbReference type="PIRSF" id="PIRSF000451">
    <property type="entry name" value="PKS_III"/>
    <property type="match status" value="1"/>
</dbReference>
<dbReference type="SUPFAM" id="SSF53901">
    <property type="entry name" value="Thiolase-like"/>
    <property type="match status" value="2"/>
</dbReference>
<dbReference type="PROSITE" id="PS00441">
    <property type="entry name" value="CHALCONE_SYNTH"/>
    <property type="match status" value="1"/>
</dbReference>
<name>CHS3_IPOBA</name>
<accession>Q9MB40</accession>
<keyword id="KW-0012">Acyltransferase</keyword>
<keyword id="KW-0284">Flavonoid biosynthesis</keyword>
<keyword id="KW-0808">Transferase</keyword>
<feature type="chain" id="PRO_0000215985" description="Chalcone synthase LF3">
    <location>
        <begin position="1"/>
        <end position="388"/>
    </location>
</feature>
<feature type="active site" evidence="1">
    <location>
        <position position="164"/>
    </location>
</feature>
<gene>
    <name type="primary">CHS-LF3</name>
</gene>
<proteinExistence type="evidence at transcript level"/>
<protein>
    <recommendedName>
        <fullName>Chalcone synthase LF3</fullName>
        <ecNumber>2.3.1.74</ecNumber>
    </recommendedName>
    <alternativeName>
        <fullName>Naringenin-chalcone synthase LF3</fullName>
    </alternativeName>
</protein>
<reference key="1">
    <citation type="submission" date="2000-01" db="EMBL/GenBank/DDBJ databases">
        <authorList>
            <person name="Hsu T.-J."/>
            <person name="Morita H."/>
            <person name="Shiokawa K."/>
            <person name="Noguchi H."/>
        </authorList>
    </citation>
    <scope>NUCLEOTIDE SEQUENCE [MRNA]</scope>
</reference>
<evidence type="ECO:0000255" key="1">
    <source>
        <dbReference type="PROSITE-ProRule" id="PRU10023"/>
    </source>
</evidence>
<evidence type="ECO:0000305" key="2"/>
<organism>
    <name type="scientific">Ipomoea batatas</name>
    <name type="common">Sweet potato</name>
    <name type="synonym">Convolvulus batatas</name>
    <dbReference type="NCBI Taxonomy" id="4120"/>
    <lineage>
        <taxon>Eukaryota</taxon>
        <taxon>Viridiplantae</taxon>
        <taxon>Streptophyta</taxon>
        <taxon>Embryophyta</taxon>
        <taxon>Tracheophyta</taxon>
        <taxon>Spermatophyta</taxon>
        <taxon>Magnoliopsida</taxon>
        <taxon>eudicotyledons</taxon>
        <taxon>Gunneridae</taxon>
        <taxon>Pentapetalae</taxon>
        <taxon>asterids</taxon>
        <taxon>lamiids</taxon>
        <taxon>Solanales</taxon>
        <taxon>Convolvulaceae</taxon>
        <taxon>Ipomoeeae</taxon>
        <taxon>Ipomoea</taxon>
    </lineage>
</organism>
<comment type="function">
    <text>The primary product of this enzyme is 4,2',4',6'-tetrahydroxychalcone (also termed naringenin-chalcone or chalcone) which can under specific conditions spontaneously isomerize into naringenin.</text>
</comment>
<comment type="catalytic activity">
    <reaction evidence="1">
        <text>(E)-4-coumaroyl-CoA + 3 malonyl-CoA + 3 H(+) = 2',4,4',6'-tetrahydroxychalcone + 3 CO2 + 4 CoA</text>
        <dbReference type="Rhea" id="RHEA:11128"/>
        <dbReference type="ChEBI" id="CHEBI:15378"/>
        <dbReference type="ChEBI" id="CHEBI:15413"/>
        <dbReference type="ChEBI" id="CHEBI:16526"/>
        <dbReference type="ChEBI" id="CHEBI:57287"/>
        <dbReference type="ChEBI" id="CHEBI:57384"/>
        <dbReference type="ChEBI" id="CHEBI:85008"/>
        <dbReference type="EC" id="2.3.1.74"/>
    </reaction>
</comment>
<comment type="pathway">
    <text>Secondary metabolite biosynthesis; flavonoid biosynthesis.</text>
</comment>
<comment type="similarity">
    <text evidence="2">Belongs to the thiolase-like superfamily. Chalcone/stilbene synthases family.</text>
</comment>